<feature type="chain" id="PRO_1000048427" description="Light-independent protochlorophyllide reductase subunit B">
    <location>
        <begin position="1"/>
        <end position="530"/>
    </location>
</feature>
<feature type="active site" description="Proton donor" evidence="1">
    <location>
        <position position="290"/>
    </location>
</feature>
<feature type="binding site" evidence="1">
    <location>
        <position position="36"/>
    </location>
    <ligand>
        <name>[4Fe-4S] cluster</name>
        <dbReference type="ChEBI" id="CHEBI:49883"/>
        <note>ligand shared with heterodimeric partner</note>
    </ligand>
</feature>
<feature type="binding site" evidence="1">
    <location>
        <begin position="425"/>
        <end position="426"/>
    </location>
    <ligand>
        <name>substrate</name>
    </ligand>
</feature>
<reference key="1">
    <citation type="submission" date="2006-05" db="EMBL/GenBank/DDBJ databases">
        <authorList>
            <consortium name="Genoscope"/>
        </authorList>
    </citation>
    <scope>NUCLEOTIDE SEQUENCE [LARGE SCALE GENOMIC DNA]</scope>
    <source>
        <strain>WH7803</strain>
    </source>
</reference>
<accession>A5GJI2</accession>
<gene>
    <name evidence="1" type="primary">chlB</name>
    <name type="ordered locus">SynWH7803_0671</name>
</gene>
<proteinExistence type="inferred from homology"/>
<keyword id="KW-0004">4Fe-4S</keyword>
<keyword id="KW-0067">ATP-binding</keyword>
<keyword id="KW-0149">Chlorophyll biosynthesis</keyword>
<keyword id="KW-0408">Iron</keyword>
<keyword id="KW-0411">Iron-sulfur</keyword>
<keyword id="KW-0479">Metal-binding</keyword>
<keyword id="KW-0547">Nucleotide-binding</keyword>
<keyword id="KW-0560">Oxidoreductase</keyword>
<keyword id="KW-0602">Photosynthesis</keyword>
<keyword id="KW-1185">Reference proteome</keyword>
<protein>
    <recommendedName>
        <fullName evidence="1">Light-independent protochlorophyllide reductase subunit B</fullName>
        <shortName evidence="1">DPOR subunit B</shortName>
        <shortName evidence="1">LI-POR subunit B</shortName>
        <ecNumber evidence="1">1.3.7.7</ecNumber>
    </recommendedName>
</protein>
<organism>
    <name type="scientific">Synechococcus sp. (strain WH7803)</name>
    <dbReference type="NCBI Taxonomy" id="32051"/>
    <lineage>
        <taxon>Bacteria</taxon>
        <taxon>Bacillati</taxon>
        <taxon>Cyanobacteriota</taxon>
        <taxon>Cyanophyceae</taxon>
        <taxon>Synechococcales</taxon>
        <taxon>Synechococcaceae</taxon>
        <taxon>Synechococcus</taxon>
    </lineage>
</organism>
<sequence>MELTLWTYEGPPHVGAMRIAASMHGVHYVLHAPQGDTYADLLFTMIERRGQRPPVTYTTFQARDLGGDTAELVKRHVQEAADRFQPDALLVGESCTAELIQDQPGALAQGMGLPMPVVTLELPAYSKKENWGASETFYQLMRGLLKQSVPPQPSHDVQAWKHEGRRPRVNLLGPSLLGFRCRDDVLEVQRLLSLHGIDVGVVAPLGAGVEDILRLPQADLNVCLYPEVAESSCSWLERNFGIPFSKTVPIGMGATHDFLVEVHALLGMTPPEAAEGYQRSRMPWYSESVDSTYLTGKRVFIFGDGTHAIAAARICSEELGFTVVGLGSYSREMARPVRAAAKKLGLEALICDDYLAVEAAMAEAAPELVLGTQMERHSAKRLGIPCAVISTPMHVQDVPARLSPQMGWEGANVIFDAWVHPLMMGLEEHLIGMFRHDFEFVDGHQSHLGHAGGAGAGNNHGTESVRASGCQDEAPSGQLIWTADGEAELKKIPFFVRGKVRRNAESYARTVGCKEISSETLYDAKAHYKA</sequence>
<comment type="function">
    <text evidence="1">Component of the dark-operative protochlorophyllide reductase (DPOR) that uses Mg-ATP and reduced ferredoxin to reduce ring D of protochlorophyllide (Pchlide) to form chlorophyllide a (Chlide). This reaction is light-independent. The NB-protein (ChlN-ChlB) is the catalytic component of the complex.</text>
</comment>
<comment type="catalytic activity">
    <reaction evidence="1">
        <text>chlorophyllide a + oxidized 2[4Fe-4S]-[ferredoxin] + 2 ADP + 2 phosphate = protochlorophyllide a + reduced 2[4Fe-4S]-[ferredoxin] + 2 ATP + 2 H2O</text>
        <dbReference type="Rhea" id="RHEA:28202"/>
        <dbReference type="Rhea" id="RHEA-COMP:10002"/>
        <dbReference type="Rhea" id="RHEA-COMP:10004"/>
        <dbReference type="ChEBI" id="CHEBI:15377"/>
        <dbReference type="ChEBI" id="CHEBI:30616"/>
        <dbReference type="ChEBI" id="CHEBI:33722"/>
        <dbReference type="ChEBI" id="CHEBI:33723"/>
        <dbReference type="ChEBI" id="CHEBI:43474"/>
        <dbReference type="ChEBI" id="CHEBI:83348"/>
        <dbReference type="ChEBI" id="CHEBI:83350"/>
        <dbReference type="ChEBI" id="CHEBI:456216"/>
        <dbReference type="EC" id="1.3.7.7"/>
    </reaction>
</comment>
<comment type="cofactor">
    <cofactor evidence="1">
        <name>[4Fe-4S] cluster</name>
        <dbReference type="ChEBI" id="CHEBI:49883"/>
    </cofactor>
    <text evidence="1">Binds 1 [4Fe-4S] cluster per heterodimer. The cluster is bound at the heterodimer interface by residues from both subunits.</text>
</comment>
<comment type="pathway">
    <text evidence="1">Porphyrin-containing compound metabolism; chlorophyll biosynthesis (light-independent).</text>
</comment>
<comment type="subunit">
    <text evidence="1">Protochlorophyllide reductase is composed of three subunits; ChlL, ChlN and ChlB. Forms a heterotetramer of two ChlB and two ChlN subunits.</text>
</comment>
<comment type="similarity">
    <text evidence="1">Belongs to the ChlB/BchB/BchZ family.</text>
</comment>
<evidence type="ECO:0000255" key="1">
    <source>
        <dbReference type="HAMAP-Rule" id="MF_00353"/>
    </source>
</evidence>
<dbReference type="EC" id="1.3.7.7" evidence="1"/>
<dbReference type="EMBL" id="CT971583">
    <property type="protein sequence ID" value="CAK23097.1"/>
    <property type="molecule type" value="Genomic_DNA"/>
</dbReference>
<dbReference type="SMR" id="A5GJI2"/>
<dbReference type="STRING" id="32051.SynWH7803_0671"/>
<dbReference type="KEGG" id="syx:SynWH7803_0671"/>
<dbReference type="eggNOG" id="COG2710">
    <property type="taxonomic scope" value="Bacteria"/>
</dbReference>
<dbReference type="HOGENOM" id="CLU_025470_0_0_3"/>
<dbReference type="OrthoDB" id="5717231at2"/>
<dbReference type="UniPathway" id="UPA00670"/>
<dbReference type="Proteomes" id="UP000001566">
    <property type="component" value="Chromosome"/>
</dbReference>
<dbReference type="GO" id="GO:0051539">
    <property type="term" value="F:4 iron, 4 sulfur cluster binding"/>
    <property type="evidence" value="ECO:0007669"/>
    <property type="project" value="UniProtKB-UniRule"/>
</dbReference>
<dbReference type="GO" id="GO:0005524">
    <property type="term" value="F:ATP binding"/>
    <property type="evidence" value="ECO:0007669"/>
    <property type="project" value="UniProtKB-UniRule"/>
</dbReference>
<dbReference type="GO" id="GO:0046872">
    <property type="term" value="F:metal ion binding"/>
    <property type="evidence" value="ECO:0007669"/>
    <property type="project" value="UniProtKB-KW"/>
</dbReference>
<dbReference type="GO" id="GO:0016730">
    <property type="term" value="F:oxidoreductase activity, acting on iron-sulfur proteins as donors"/>
    <property type="evidence" value="ECO:0007669"/>
    <property type="project" value="InterPro"/>
</dbReference>
<dbReference type="GO" id="GO:0016636">
    <property type="term" value="F:oxidoreductase activity, acting on the CH-CH group of donors, iron-sulfur protein as acceptor"/>
    <property type="evidence" value="ECO:0007669"/>
    <property type="project" value="UniProtKB-UniRule"/>
</dbReference>
<dbReference type="GO" id="GO:0036068">
    <property type="term" value="P:light-independent chlorophyll biosynthetic process"/>
    <property type="evidence" value="ECO:0007669"/>
    <property type="project" value="UniProtKB-UniRule"/>
</dbReference>
<dbReference type="GO" id="GO:0019685">
    <property type="term" value="P:photosynthesis, dark reaction"/>
    <property type="evidence" value="ECO:0007669"/>
    <property type="project" value="InterPro"/>
</dbReference>
<dbReference type="Gene3D" id="1.20.89.20">
    <property type="match status" value="1"/>
</dbReference>
<dbReference type="Gene3D" id="3.40.50.1980">
    <property type="entry name" value="Nitrogenase molybdenum iron protein domain"/>
    <property type="match status" value="3"/>
</dbReference>
<dbReference type="Gene3D" id="1.10.8.550">
    <property type="entry name" value="Proto-chlorophyllide reductase 57 kD subunit B"/>
    <property type="match status" value="1"/>
</dbReference>
<dbReference type="HAMAP" id="MF_00353">
    <property type="entry name" value="ChlB_BchB"/>
    <property type="match status" value="1"/>
</dbReference>
<dbReference type="InterPro" id="IPR050152">
    <property type="entry name" value="ChlB/BchB/BchZ"/>
</dbReference>
<dbReference type="InterPro" id="IPR013580">
    <property type="entry name" value="LI-POR_suB-like_C"/>
</dbReference>
<dbReference type="InterPro" id="IPR000510">
    <property type="entry name" value="Nase/OxRdtase_comp1"/>
</dbReference>
<dbReference type="InterPro" id="IPR042298">
    <property type="entry name" value="P-CP_red_C"/>
</dbReference>
<dbReference type="InterPro" id="IPR005969">
    <property type="entry name" value="Protochl_reductB"/>
</dbReference>
<dbReference type="InterPro" id="IPR016209">
    <property type="entry name" value="Protochlorophyllide_Rdtase"/>
</dbReference>
<dbReference type="NCBIfam" id="TIGR01278">
    <property type="entry name" value="DPOR_BchB"/>
    <property type="match status" value="1"/>
</dbReference>
<dbReference type="NCBIfam" id="NF002790">
    <property type="entry name" value="PRK02910.1-4"/>
    <property type="match status" value="1"/>
</dbReference>
<dbReference type="PANTHER" id="PTHR33712">
    <property type="entry name" value="LIGHT-INDEPENDENT PROTOCHLOROPHYLLIDE REDUCTASE SUBUNIT B"/>
    <property type="match status" value="1"/>
</dbReference>
<dbReference type="PANTHER" id="PTHR33712:SF7">
    <property type="entry name" value="LIGHT-INDEPENDENT PROTOCHLOROPHYLLIDE REDUCTASE SUBUNIT B"/>
    <property type="match status" value="1"/>
</dbReference>
<dbReference type="Pfam" id="PF00148">
    <property type="entry name" value="Oxidored_nitro"/>
    <property type="match status" value="1"/>
</dbReference>
<dbReference type="Pfam" id="PF08369">
    <property type="entry name" value="PCP_red"/>
    <property type="match status" value="1"/>
</dbReference>
<dbReference type="PIRSF" id="PIRSF000163">
    <property type="entry name" value="PCP_ChlB"/>
    <property type="match status" value="1"/>
</dbReference>
<dbReference type="SUPFAM" id="SSF53807">
    <property type="entry name" value="Helical backbone' metal receptor"/>
    <property type="match status" value="1"/>
</dbReference>
<name>CHLB_SYNPW</name>